<gene>
    <name type="primary">Fastkd5</name>
    <name type="synonym">Kiaa1792</name>
</gene>
<evidence type="ECO:0000250" key="1">
    <source>
        <dbReference type="UniProtKB" id="Q7L8L6"/>
    </source>
</evidence>
<evidence type="ECO:0000255" key="2">
    <source>
        <dbReference type="PROSITE-ProRule" id="PRU00619"/>
    </source>
</evidence>
<evidence type="ECO:0000269" key="3">
    <source>
    </source>
</evidence>
<evidence type="ECO:0000305" key="4"/>
<sequence length="762" mass="86600">MSAALKLLEPLKYKAPCNPAYRAAQSVAHWHMGNITPHGGQTLPECNSSCHLARKVKNVGGTTLPRRTFTASSAHLGLEFNKASTLNASTLHPDSSSAGGGEEDVEVFDSFEGTRVFLKLRPEYQLHSYNRSDTHQPIAASEVELILHKVTFYQNKLQPEVITNYFYKLSSLPAEQNSVLLSSNSFALLCQLSVKNIQLFNTSDLISILKAFVDLRIPPSLSMLDVYETRFCHQVWEMTLDQLLLVADLWRNLGRRVPRFFKIFFSYLNLHWRELSLSQLIHLIYIIGENRQVPQDLMQRLESLILKYVDSVNLEEVGTICLGFFKSSSSLSEFVMRKIGDLACANMQHLSSHTLVHILKMFRFTHVDHIHFMKQFGEIAPQRIPSLGVQGVMHLTLACSALRILDERVMNAVAASLPPRVAHCRSKDVAKILWSFGTLNYKPPNTEEFYSSLINEIHRKMPEFNQYPEHLLTCLIGLAFSEYFPVEFINVALSPGFVKLAQERSKFELTKELFTLDGTVAIECPDYKGNRLNSHLQQETSANLWNLASKDMRSKPEFLETLYLLETMLGGPQYIKHHMILPHTRSSDLEVQLDANMKPMPFNSEATPTEDGAQLRFKQVGVSLTDDLMNQLLKGKAKRYFQGQIELETGQPPMELRKKTTVPLVNSGCNGTDRLGDGMVGLCPLAHMQPPLVKLAIQFTNKNQYCYGSRALLGLHNMKRRQLVQIGYRVVELPHWEWLPLLKRTRLEKLAYLHEKVFTSAL</sequence>
<dbReference type="EMBL" id="AK143929">
    <property type="protein sequence ID" value="BAE25612.1"/>
    <property type="status" value="ALT_INIT"/>
    <property type="molecule type" value="mRNA"/>
</dbReference>
<dbReference type="EMBL" id="AK220420">
    <property type="protein sequence ID" value="BAD90466.1"/>
    <property type="status" value="ALT_INIT"/>
    <property type="molecule type" value="mRNA"/>
</dbReference>
<dbReference type="EMBL" id="AL731707">
    <property type="status" value="NOT_ANNOTATED_CDS"/>
    <property type="molecule type" value="Genomic_DNA"/>
</dbReference>
<dbReference type="EMBL" id="BC052898">
    <property type="protein sequence ID" value="AAH52898.1"/>
    <property type="molecule type" value="mRNA"/>
</dbReference>
<dbReference type="CCDS" id="CCDS50713.2"/>
<dbReference type="RefSeq" id="NP_001139556.2">
    <property type="nucleotide sequence ID" value="NM_001146084.2"/>
</dbReference>
<dbReference type="RefSeq" id="NP_001364053.1">
    <property type="nucleotide sequence ID" value="NM_001377124.1"/>
</dbReference>
<dbReference type="RefSeq" id="NP_001364054.1">
    <property type="nucleotide sequence ID" value="NM_001377125.1"/>
</dbReference>
<dbReference type="RefSeq" id="NP_937819.3">
    <property type="nucleotide sequence ID" value="NM_198176.3"/>
</dbReference>
<dbReference type="SMR" id="Q7TMV3"/>
<dbReference type="BioGRID" id="237566">
    <property type="interactions" value="13"/>
</dbReference>
<dbReference type="FunCoup" id="Q7TMV3">
    <property type="interactions" value="1299"/>
</dbReference>
<dbReference type="IntAct" id="Q7TMV3">
    <property type="interactions" value="1"/>
</dbReference>
<dbReference type="MINT" id="Q7TMV3"/>
<dbReference type="STRING" id="10090.ENSMUSP00000137385"/>
<dbReference type="PhosphoSitePlus" id="Q7TMV3"/>
<dbReference type="PaxDb" id="10090-ENSMUSP00000105891"/>
<dbReference type="PeptideAtlas" id="Q7TMV3"/>
<dbReference type="ProteomicsDB" id="275584"/>
<dbReference type="Pumba" id="Q7TMV3"/>
<dbReference type="Antibodypedia" id="23456">
    <property type="antibodies" value="90 antibodies from 19 providers"/>
</dbReference>
<dbReference type="DNASU" id="380601"/>
<dbReference type="Ensembl" id="ENSMUST00000110262.3">
    <property type="protein sequence ID" value="ENSMUSP00000105891.3"/>
    <property type="gene ID" value="ENSMUSG00000079043.4"/>
</dbReference>
<dbReference type="GeneID" id="380601"/>
<dbReference type="KEGG" id="mmu:380601"/>
<dbReference type="UCSC" id="uc008mjm.3">
    <property type="organism name" value="mouse"/>
</dbReference>
<dbReference type="AGR" id="MGI:2139469"/>
<dbReference type="CTD" id="60493"/>
<dbReference type="MGI" id="MGI:2139469">
    <property type="gene designation" value="Fastkd5"/>
</dbReference>
<dbReference type="VEuPathDB" id="HostDB:ENSMUSG00000079043"/>
<dbReference type="eggNOG" id="ENOG502QRPY">
    <property type="taxonomic scope" value="Eukaryota"/>
</dbReference>
<dbReference type="GeneTree" id="ENSGT01030000234607"/>
<dbReference type="InParanoid" id="Q7TMV3"/>
<dbReference type="OMA" id="PHTRSID"/>
<dbReference type="OrthoDB" id="10064757at2759"/>
<dbReference type="PhylomeDB" id="Q7TMV3"/>
<dbReference type="TreeFam" id="TF352874"/>
<dbReference type="BioGRID-ORCS" id="380601">
    <property type="hits" value="16 hits in 76 CRISPR screens"/>
</dbReference>
<dbReference type="PRO" id="PR:Q7TMV3"/>
<dbReference type="Proteomes" id="UP000000589">
    <property type="component" value="Chromosome 2"/>
</dbReference>
<dbReference type="RNAct" id="Q7TMV3">
    <property type="molecule type" value="protein"/>
</dbReference>
<dbReference type="Bgee" id="ENSMUSG00000079043">
    <property type="expression patterns" value="Expressed in otic placode and 279 other cell types or tissues"/>
</dbReference>
<dbReference type="ExpressionAtlas" id="Q7TMV3">
    <property type="expression patterns" value="baseline and differential"/>
</dbReference>
<dbReference type="GO" id="GO:0042645">
    <property type="term" value="C:mitochondrial nucleoid"/>
    <property type="evidence" value="ECO:0000250"/>
    <property type="project" value="UniProtKB"/>
</dbReference>
<dbReference type="GO" id="GO:0005739">
    <property type="term" value="C:mitochondrion"/>
    <property type="evidence" value="ECO:0000250"/>
    <property type="project" value="UniProtKB"/>
</dbReference>
<dbReference type="GO" id="GO:0035770">
    <property type="term" value="C:ribonucleoprotein granule"/>
    <property type="evidence" value="ECO:0000250"/>
    <property type="project" value="UniProtKB"/>
</dbReference>
<dbReference type="GO" id="GO:0019843">
    <property type="term" value="F:rRNA binding"/>
    <property type="evidence" value="ECO:0000250"/>
    <property type="project" value="UniProtKB"/>
</dbReference>
<dbReference type="GO" id="GO:0000963">
    <property type="term" value="P:mitochondrial RNA processing"/>
    <property type="evidence" value="ECO:0000250"/>
    <property type="project" value="UniProtKB"/>
</dbReference>
<dbReference type="GO" id="GO:0006397">
    <property type="term" value="P:mRNA processing"/>
    <property type="evidence" value="ECO:0007669"/>
    <property type="project" value="UniProtKB-KW"/>
</dbReference>
<dbReference type="GO" id="GO:0044528">
    <property type="term" value="P:regulation of mitochondrial mRNA stability"/>
    <property type="evidence" value="ECO:0007669"/>
    <property type="project" value="InterPro"/>
</dbReference>
<dbReference type="InterPro" id="IPR013579">
    <property type="entry name" value="FAST_2"/>
</dbReference>
<dbReference type="InterPro" id="IPR050870">
    <property type="entry name" value="FAST_kinase"/>
</dbReference>
<dbReference type="InterPro" id="IPR010622">
    <property type="entry name" value="FAST_Leu-rich"/>
</dbReference>
<dbReference type="InterPro" id="IPR013584">
    <property type="entry name" value="RAP"/>
</dbReference>
<dbReference type="PANTHER" id="PTHR21228:SF70">
    <property type="entry name" value="FAST KINASE DOMAIN-CONTAINING PROTEIN 5, MITOCHONDRIAL"/>
    <property type="match status" value="1"/>
</dbReference>
<dbReference type="PANTHER" id="PTHR21228">
    <property type="entry name" value="FAST LEU-RICH DOMAIN-CONTAINING"/>
    <property type="match status" value="1"/>
</dbReference>
<dbReference type="Pfam" id="PF06743">
    <property type="entry name" value="FAST_1"/>
    <property type="match status" value="1"/>
</dbReference>
<dbReference type="Pfam" id="PF08368">
    <property type="entry name" value="FAST_2"/>
    <property type="match status" value="1"/>
</dbReference>
<dbReference type="Pfam" id="PF08373">
    <property type="entry name" value="RAP"/>
    <property type="match status" value="1"/>
</dbReference>
<dbReference type="SMART" id="SM00952">
    <property type="entry name" value="RAP"/>
    <property type="match status" value="1"/>
</dbReference>
<dbReference type="PROSITE" id="PS51286">
    <property type="entry name" value="RAP"/>
    <property type="match status" value="1"/>
</dbReference>
<reference key="1">
    <citation type="journal article" date="2005" name="Science">
        <title>The transcriptional landscape of the mammalian genome.</title>
        <authorList>
            <person name="Carninci P."/>
            <person name="Kasukawa T."/>
            <person name="Katayama S."/>
            <person name="Gough J."/>
            <person name="Frith M.C."/>
            <person name="Maeda N."/>
            <person name="Oyama R."/>
            <person name="Ravasi T."/>
            <person name="Lenhard B."/>
            <person name="Wells C."/>
            <person name="Kodzius R."/>
            <person name="Shimokawa K."/>
            <person name="Bajic V.B."/>
            <person name="Brenner S.E."/>
            <person name="Batalov S."/>
            <person name="Forrest A.R."/>
            <person name="Zavolan M."/>
            <person name="Davis M.J."/>
            <person name="Wilming L.G."/>
            <person name="Aidinis V."/>
            <person name="Allen J.E."/>
            <person name="Ambesi-Impiombato A."/>
            <person name="Apweiler R."/>
            <person name="Aturaliya R.N."/>
            <person name="Bailey T.L."/>
            <person name="Bansal M."/>
            <person name="Baxter L."/>
            <person name="Beisel K.W."/>
            <person name="Bersano T."/>
            <person name="Bono H."/>
            <person name="Chalk A.M."/>
            <person name="Chiu K.P."/>
            <person name="Choudhary V."/>
            <person name="Christoffels A."/>
            <person name="Clutterbuck D.R."/>
            <person name="Crowe M.L."/>
            <person name="Dalla E."/>
            <person name="Dalrymple B.P."/>
            <person name="de Bono B."/>
            <person name="Della Gatta G."/>
            <person name="di Bernardo D."/>
            <person name="Down T."/>
            <person name="Engstrom P."/>
            <person name="Fagiolini M."/>
            <person name="Faulkner G."/>
            <person name="Fletcher C.F."/>
            <person name="Fukushima T."/>
            <person name="Furuno M."/>
            <person name="Futaki S."/>
            <person name="Gariboldi M."/>
            <person name="Georgii-Hemming P."/>
            <person name="Gingeras T.R."/>
            <person name="Gojobori T."/>
            <person name="Green R.E."/>
            <person name="Gustincich S."/>
            <person name="Harbers M."/>
            <person name="Hayashi Y."/>
            <person name="Hensch T.K."/>
            <person name="Hirokawa N."/>
            <person name="Hill D."/>
            <person name="Huminiecki L."/>
            <person name="Iacono M."/>
            <person name="Ikeo K."/>
            <person name="Iwama A."/>
            <person name="Ishikawa T."/>
            <person name="Jakt M."/>
            <person name="Kanapin A."/>
            <person name="Katoh M."/>
            <person name="Kawasawa Y."/>
            <person name="Kelso J."/>
            <person name="Kitamura H."/>
            <person name="Kitano H."/>
            <person name="Kollias G."/>
            <person name="Krishnan S.P."/>
            <person name="Kruger A."/>
            <person name="Kummerfeld S.K."/>
            <person name="Kurochkin I.V."/>
            <person name="Lareau L.F."/>
            <person name="Lazarevic D."/>
            <person name="Lipovich L."/>
            <person name="Liu J."/>
            <person name="Liuni S."/>
            <person name="McWilliam S."/>
            <person name="Madan Babu M."/>
            <person name="Madera M."/>
            <person name="Marchionni L."/>
            <person name="Matsuda H."/>
            <person name="Matsuzawa S."/>
            <person name="Miki H."/>
            <person name="Mignone F."/>
            <person name="Miyake S."/>
            <person name="Morris K."/>
            <person name="Mottagui-Tabar S."/>
            <person name="Mulder N."/>
            <person name="Nakano N."/>
            <person name="Nakauchi H."/>
            <person name="Ng P."/>
            <person name="Nilsson R."/>
            <person name="Nishiguchi S."/>
            <person name="Nishikawa S."/>
            <person name="Nori F."/>
            <person name="Ohara O."/>
            <person name="Okazaki Y."/>
            <person name="Orlando V."/>
            <person name="Pang K.C."/>
            <person name="Pavan W.J."/>
            <person name="Pavesi G."/>
            <person name="Pesole G."/>
            <person name="Petrovsky N."/>
            <person name="Piazza S."/>
            <person name="Reed J."/>
            <person name="Reid J.F."/>
            <person name="Ring B.Z."/>
            <person name="Ringwald M."/>
            <person name="Rost B."/>
            <person name="Ruan Y."/>
            <person name="Salzberg S.L."/>
            <person name="Sandelin A."/>
            <person name="Schneider C."/>
            <person name="Schoenbach C."/>
            <person name="Sekiguchi K."/>
            <person name="Semple C.A."/>
            <person name="Seno S."/>
            <person name="Sessa L."/>
            <person name="Sheng Y."/>
            <person name="Shibata Y."/>
            <person name="Shimada H."/>
            <person name="Shimada K."/>
            <person name="Silva D."/>
            <person name="Sinclair B."/>
            <person name="Sperling S."/>
            <person name="Stupka E."/>
            <person name="Sugiura K."/>
            <person name="Sultana R."/>
            <person name="Takenaka Y."/>
            <person name="Taki K."/>
            <person name="Tammoja K."/>
            <person name="Tan S.L."/>
            <person name="Tang S."/>
            <person name="Taylor M.S."/>
            <person name="Tegner J."/>
            <person name="Teichmann S.A."/>
            <person name="Ueda H.R."/>
            <person name="van Nimwegen E."/>
            <person name="Verardo R."/>
            <person name="Wei C.L."/>
            <person name="Yagi K."/>
            <person name="Yamanishi H."/>
            <person name="Zabarovsky E."/>
            <person name="Zhu S."/>
            <person name="Zimmer A."/>
            <person name="Hide W."/>
            <person name="Bult C."/>
            <person name="Grimmond S.M."/>
            <person name="Teasdale R.D."/>
            <person name="Liu E.T."/>
            <person name="Brusic V."/>
            <person name="Quackenbush J."/>
            <person name="Wahlestedt C."/>
            <person name="Mattick J.S."/>
            <person name="Hume D.A."/>
            <person name="Kai C."/>
            <person name="Sasaki D."/>
            <person name="Tomaru Y."/>
            <person name="Fukuda S."/>
            <person name="Kanamori-Katayama M."/>
            <person name="Suzuki M."/>
            <person name="Aoki J."/>
            <person name="Arakawa T."/>
            <person name="Iida J."/>
            <person name="Imamura K."/>
            <person name="Itoh M."/>
            <person name="Kato T."/>
            <person name="Kawaji H."/>
            <person name="Kawagashira N."/>
            <person name="Kawashima T."/>
            <person name="Kojima M."/>
            <person name="Kondo S."/>
            <person name="Konno H."/>
            <person name="Nakano K."/>
            <person name="Ninomiya N."/>
            <person name="Nishio T."/>
            <person name="Okada M."/>
            <person name="Plessy C."/>
            <person name="Shibata K."/>
            <person name="Shiraki T."/>
            <person name="Suzuki S."/>
            <person name="Tagami M."/>
            <person name="Waki K."/>
            <person name="Watahiki A."/>
            <person name="Okamura-Oho Y."/>
            <person name="Suzuki H."/>
            <person name="Kawai J."/>
            <person name="Hayashizaki Y."/>
        </authorList>
    </citation>
    <scope>NUCLEOTIDE SEQUENCE [LARGE SCALE MRNA]</scope>
    <source>
        <strain>C57BL/6J</strain>
        <tissue>Kidney</tissue>
    </source>
</reference>
<reference key="2">
    <citation type="submission" date="2005-02" db="EMBL/GenBank/DDBJ databases">
        <title>Prediction of the coding sequences of mouse homologues of KIAA gene. The complete nucleotide sequences of mouse KIAA-homologous cDNAs identified by screening of terminal sequences of cDNA clones randomly sampled from size-fractionated libraries.</title>
        <authorList>
            <person name="Okazaki N."/>
            <person name="Kikuno R.F."/>
            <person name="Ohara R."/>
            <person name="Inamoto S."/>
            <person name="Nagase T."/>
            <person name="Ohara O."/>
            <person name="Koga H."/>
        </authorList>
    </citation>
    <scope>NUCLEOTIDE SEQUENCE [LARGE SCALE MRNA]</scope>
    <source>
        <tissue>Brain</tissue>
    </source>
</reference>
<reference key="3">
    <citation type="journal article" date="2009" name="PLoS Biol.">
        <title>Lineage-specific biology revealed by a finished genome assembly of the mouse.</title>
        <authorList>
            <person name="Church D.M."/>
            <person name="Goodstadt L."/>
            <person name="Hillier L.W."/>
            <person name="Zody M.C."/>
            <person name="Goldstein S."/>
            <person name="She X."/>
            <person name="Bult C.J."/>
            <person name="Agarwala R."/>
            <person name="Cherry J.L."/>
            <person name="DiCuccio M."/>
            <person name="Hlavina W."/>
            <person name="Kapustin Y."/>
            <person name="Meric P."/>
            <person name="Maglott D."/>
            <person name="Birtle Z."/>
            <person name="Marques A.C."/>
            <person name="Graves T."/>
            <person name="Zhou S."/>
            <person name="Teague B."/>
            <person name="Potamousis K."/>
            <person name="Churas C."/>
            <person name="Place M."/>
            <person name="Herschleb J."/>
            <person name="Runnheim R."/>
            <person name="Forrest D."/>
            <person name="Amos-Landgraf J."/>
            <person name="Schwartz D.C."/>
            <person name="Cheng Z."/>
            <person name="Lindblad-Toh K."/>
            <person name="Eichler E.E."/>
            <person name="Ponting C.P."/>
        </authorList>
    </citation>
    <scope>NUCLEOTIDE SEQUENCE [LARGE SCALE GENOMIC DNA]</scope>
    <source>
        <strain>C57BL/6J</strain>
    </source>
</reference>
<reference key="4">
    <citation type="journal article" date="2004" name="Genome Res.">
        <title>The status, quality, and expansion of the NIH full-length cDNA project: the Mammalian Gene Collection (MGC).</title>
        <authorList>
            <consortium name="The MGC Project Team"/>
        </authorList>
    </citation>
    <scope>NUCLEOTIDE SEQUENCE [LARGE SCALE MRNA]</scope>
    <source>
        <strain>C3H/He</strain>
        <tissue>Mesenchymal stem cell</tissue>
    </source>
</reference>
<reference key="5">
    <citation type="journal article" date="2010" name="Biochem. Biophys. Res. Commun.">
        <title>Fast kinase domain-containing protein 3 is a mitochondrial protein essential for cellular respiration.</title>
        <authorList>
            <person name="Simarro M."/>
            <person name="Gimenez-Cassina A."/>
            <person name="Kedersha N."/>
            <person name="Lazaro J.B."/>
            <person name="Adelmant G.O."/>
            <person name="Marto J.A."/>
            <person name="Rhee K."/>
            <person name="Tisdale S."/>
            <person name="Danial N."/>
            <person name="Benarafa C."/>
            <person name="Orduna A."/>
            <person name="Anderson P."/>
        </authorList>
    </citation>
    <scope>TISSUE SPECIFICITY</scope>
</reference>
<keyword id="KW-0007">Acetylation</keyword>
<keyword id="KW-0496">Mitochondrion</keyword>
<keyword id="KW-1135">Mitochondrion nucleoid</keyword>
<keyword id="KW-0507">mRNA processing</keyword>
<keyword id="KW-0597">Phosphoprotein</keyword>
<keyword id="KW-1185">Reference proteome</keyword>
<keyword id="KW-0694">RNA-binding</keyword>
<keyword id="KW-0699">rRNA-binding</keyword>
<keyword id="KW-0809">Transit peptide</keyword>
<name>FAKD5_MOUSE</name>
<protein>
    <recommendedName>
        <fullName>FAST kinase domain-containing protein 5, mitochondrial</fullName>
    </recommendedName>
</protein>
<proteinExistence type="evidence at transcript level"/>
<feature type="transit peptide" description="Mitochondrion" evidence="4">
    <location>
        <begin position="1"/>
        <end status="unknown"/>
    </location>
</feature>
<feature type="chain" id="PRO_0000284981" description="FAST kinase domain-containing protein 5, mitochondrial">
    <location>
        <begin status="unknown"/>
        <end position="762"/>
    </location>
</feature>
<feature type="domain" description="RAP" evidence="2">
    <location>
        <begin position="695"/>
        <end position="755"/>
    </location>
</feature>
<feature type="modified residue" description="Phosphoserine" evidence="1">
    <location>
        <position position="95"/>
    </location>
</feature>
<feature type="modified residue" description="N6-acetyllysine" evidence="1">
    <location>
        <position position="506"/>
    </location>
</feature>
<organism>
    <name type="scientific">Mus musculus</name>
    <name type="common">Mouse</name>
    <dbReference type="NCBI Taxonomy" id="10090"/>
    <lineage>
        <taxon>Eukaryota</taxon>
        <taxon>Metazoa</taxon>
        <taxon>Chordata</taxon>
        <taxon>Craniata</taxon>
        <taxon>Vertebrata</taxon>
        <taxon>Euteleostomi</taxon>
        <taxon>Mammalia</taxon>
        <taxon>Eutheria</taxon>
        <taxon>Euarchontoglires</taxon>
        <taxon>Glires</taxon>
        <taxon>Rodentia</taxon>
        <taxon>Myomorpha</taxon>
        <taxon>Muroidea</taxon>
        <taxon>Muridae</taxon>
        <taxon>Murinae</taxon>
        <taxon>Mus</taxon>
        <taxon>Mus</taxon>
    </lineage>
</organism>
<comment type="function">
    <text evidence="1">Plays an important role in the processing of non-canonical mitochondrial mRNA precursors.</text>
</comment>
<comment type="subunit">
    <text evidence="1">Found in a complex with GRSF1, DDX28, DHX30 and FASTKD2. Associates with the 12S mitochondrial rRNA (12S mt-rRNA).</text>
</comment>
<comment type="subcellular location">
    <subcellularLocation>
        <location evidence="1">Mitochondrion matrix</location>
        <location evidence="1">Mitochondrion nucleoid</location>
    </subcellularLocation>
    <text evidence="1">Localizes to mitochondrial RNA granules found in close proximity to the mitochondrial nucleoids.</text>
</comment>
<comment type="tissue specificity">
    <text evidence="3">Expression detected in spleen, testis, colon, heart, smooth muscle, kidney, brain, lung, liver, brown and white adipose tissue.</text>
</comment>
<comment type="similarity">
    <text evidence="4">Belongs to the FAST kinase family.</text>
</comment>
<comment type="sequence caution" evidence="4">
    <conflict type="erroneous initiation">
        <sequence resource="EMBL-CDS" id="BAD90466"/>
    </conflict>
    <text>Extended N-terminus.</text>
</comment>
<comment type="sequence caution" evidence="4">
    <conflict type="erroneous initiation">
        <sequence resource="EMBL-CDS" id="BAE25612"/>
    </conflict>
    <text>Extended N-terminus.</text>
</comment>
<accession>Q7TMV3</accession>
<accession>Q3UNY5</accession>
<accession>Q5DTV0</accession>